<feature type="chain" id="PRO_0000173873" description="Protein sco1">
    <location>
        <begin position="1"/>
        <end position="263"/>
    </location>
</feature>
<feature type="binding site" evidence="1">
    <location>
        <position position="130"/>
    </location>
    <ligand>
        <name>Cu cation</name>
        <dbReference type="ChEBI" id="CHEBI:23378"/>
    </ligand>
</feature>
<feature type="binding site" evidence="1">
    <location>
        <position position="134"/>
    </location>
    <ligand>
        <name>Cu cation</name>
        <dbReference type="ChEBI" id="CHEBI:23378"/>
    </ligand>
</feature>
<feature type="binding site" evidence="1">
    <location>
        <position position="222"/>
    </location>
    <ligand>
        <name>Cu cation</name>
        <dbReference type="ChEBI" id="CHEBI:23378"/>
    </ligand>
</feature>
<accession>O42899</accession>
<comment type="function">
    <text evidence="1">Acts as a copper chaperone, transporting copper to the Cu(A) site on the cytochrome c oxidase subunit II (COX2).</text>
</comment>
<comment type="subcellular location">
    <subcellularLocation>
        <location evidence="1">Mitochondrion inner membrane</location>
    </subcellularLocation>
</comment>
<comment type="similarity">
    <text evidence="2">Belongs to the SCO1/2 family.</text>
</comment>
<keyword id="KW-0143">Chaperone</keyword>
<keyword id="KW-0186">Copper</keyword>
<keyword id="KW-0472">Membrane</keyword>
<keyword id="KW-0479">Metal-binding</keyword>
<keyword id="KW-0496">Mitochondrion</keyword>
<keyword id="KW-0999">Mitochondrion inner membrane</keyword>
<keyword id="KW-1185">Reference proteome</keyword>
<reference key="1">
    <citation type="journal article" date="2002" name="Nature">
        <title>The genome sequence of Schizosaccharomyces pombe.</title>
        <authorList>
            <person name="Wood V."/>
            <person name="Gwilliam R."/>
            <person name="Rajandream M.A."/>
            <person name="Lyne M.H."/>
            <person name="Lyne R."/>
            <person name="Stewart A."/>
            <person name="Sgouros J.G."/>
            <person name="Peat N."/>
            <person name="Hayles J."/>
            <person name="Baker S.G."/>
            <person name="Basham D."/>
            <person name="Bowman S."/>
            <person name="Brooks K."/>
            <person name="Brown D."/>
            <person name="Brown S."/>
            <person name="Chillingworth T."/>
            <person name="Churcher C.M."/>
            <person name="Collins M."/>
            <person name="Connor R."/>
            <person name="Cronin A."/>
            <person name="Davis P."/>
            <person name="Feltwell T."/>
            <person name="Fraser A."/>
            <person name="Gentles S."/>
            <person name="Goble A."/>
            <person name="Hamlin N."/>
            <person name="Harris D.E."/>
            <person name="Hidalgo J."/>
            <person name="Hodgson G."/>
            <person name="Holroyd S."/>
            <person name="Hornsby T."/>
            <person name="Howarth S."/>
            <person name="Huckle E.J."/>
            <person name="Hunt S."/>
            <person name="Jagels K."/>
            <person name="James K.D."/>
            <person name="Jones L."/>
            <person name="Jones M."/>
            <person name="Leather S."/>
            <person name="McDonald S."/>
            <person name="McLean J."/>
            <person name="Mooney P."/>
            <person name="Moule S."/>
            <person name="Mungall K.L."/>
            <person name="Murphy L.D."/>
            <person name="Niblett D."/>
            <person name="Odell C."/>
            <person name="Oliver K."/>
            <person name="O'Neil S."/>
            <person name="Pearson D."/>
            <person name="Quail M.A."/>
            <person name="Rabbinowitsch E."/>
            <person name="Rutherford K.M."/>
            <person name="Rutter S."/>
            <person name="Saunders D."/>
            <person name="Seeger K."/>
            <person name="Sharp S."/>
            <person name="Skelton J."/>
            <person name="Simmonds M.N."/>
            <person name="Squares R."/>
            <person name="Squares S."/>
            <person name="Stevens K."/>
            <person name="Taylor K."/>
            <person name="Taylor R.G."/>
            <person name="Tivey A."/>
            <person name="Walsh S.V."/>
            <person name="Warren T."/>
            <person name="Whitehead S."/>
            <person name="Woodward J.R."/>
            <person name="Volckaert G."/>
            <person name="Aert R."/>
            <person name="Robben J."/>
            <person name="Grymonprez B."/>
            <person name="Weltjens I."/>
            <person name="Vanstreels E."/>
            <person name="Rieger M."/>
            <person name="Schaefer M."/>
            <person name="Mueller-Auer S."/>
            <person name="Gabel C."/>
            <person name="Fuchs M."/>
            <person name="Duesterhoeft A."/>
            <person name="Fritzc C."/>
            <person name="Holzer E."/>
            <person name="Moestl D."/>
            <person name="Hilbert H."/>
            <person name="Borzym K."/>
            <person name="Langer I."/>
            <person name="Beck A."/>
            <person name="Lehrach H."/>
            <person name="Reinhardt R."/>
            <person name="Pohl T.M."/>
            <person name="Eger P."/>
            <person name="Zimmermann W."/>
            <person name="Wedler H."/>
            <person name="Wambutt R."/>
            <person name="Purnelle B."/>
            <person name="Goffeau A."/>
            <person name="Cadieu E."/>
            <person name="Dreano S."/>
            <person name="Gloux S."/>
            <person name="Lelaure V."/>
            <person name="Mottier S."/>
            <person name="Galibert F."/>
            <person name="Aves S.J."/>
            <person name="Xiang Z."/>
            <person name="Hunt C."/>
            <person name="Moore K."/>
            <person name="Hurst S.M."/>
            <person name="Lucas M."/>
            <person name="Rochet M."/>
            <person name="Gaillardin C."/>
            <person name="Tallada V.A."/>
            <person name="Garzon A."/>
            <person name="Thode G."/>
            <person name="Daga R.R."/>
            <person name="Cruzado L."/>
            <person name="Jimenez J."/>
            <person name="Sanchez M."/>
            <person name="del Rey F."/>
            <person name="Benito J."/>
            <person name="Dominguez A."/>
            <person name="Revuelta J.L."/>
            <person name="Moreno S."/>
            <person name="Armstrong J."/>
            <person name="Forsburg S.L."/>
            <person name="Cerutti L."/>
            <person name="Lowe T."/>
            <person name="McCombie W.R."/>
            <person name="Paulsen I."/>
            <person name="Potashkin J."/>
            <person name="Shpakovski G.V."/>
            <person name="Ussery D."/>
            <person name="Barrell B.G."/>
            <person name="Nurse P."/>
        </authorList>
    </citation>
    <scope>NUCLEOTIDE SEQUENCE [LARGE SCALE GENOMIC DNA]</scope>
    <source>
        <strain>972 / ATCC 24843</strain>
    </source>
</reference>
<sequence length="263" mass="30240">MFRRGLVFSRHCHYSLIRPRFPLNRTCLARFADGRKNLATDNRTQTYQSWRGMISIRALLLAAATSVGLYAYFQHEKKKVLERQNDKVLATIGRPQLGGAFSLIDHHGNRVTDNDFKGKFSLIYFGFTRCPDICPDELDKMSAAIDIVNNVVGDVVYPIFITCDPARDPPQEMAEYLEDFNPKIVGLTGSYEEIKDICKKFRVYFSTPKNIDPKKDDYLVDHSVFFYLMDPEGKFIEVFGRNSTSEDLARAIGSYYLSRKKQK</sequence>
<protein>
    <recommendedName>
        <fullName>Protein sco1</fullName>
    </recommendedName>
</protein>
<gene>
    <name type="primary">sco1</name>
    <name type="ORF">SPBC119.06</name>
</gene>
<name>SCO1_SCHPO</name>
<proteinExistence type="inferred from homology"/>
<evidence type="ECO:0000250" key="1"/>
<evidence type="ECO:0000305" key="2"/>
<dbReference type="EMBL" id="CU329671">
    <property type="protein sequence ID" value="CAA17921.1"/>
    <property type="molecule type" value="Genomic_DNA"/>
</dbReference>
<dbReference type="PIR" id="T39304">
    <property type="entry name" value="T39304"/>
</dbReference>
<dbReference type="RefSeq" id="NP_595287.1">
    <property type="nucleotide sequence ID" value="NM_001021194.2"/>
</dbReference>
<dbReference type="SMR" id="O42899"/>
<dbReference type="BioGRID" id="276375">
    <property type="interactions" value="2"/>
</dbReference>
<dbReference type="FunCoup" id="O42899">
    <property type="interactions" value="203"/>
</dbReference>
<dbReference type="STRING" id="284812.O42899"/>
<dbReference type="PaxDb" id="4896-SPBC119.06.1"/>
<dbReference type="EnsemblFungi" id="SPBC119.06.1">
    <property type="protein sequence ID" value="SPBC119.06.1:pep"/>
    <property type="gene ID" value="SPBC119.06"/>
</dbReference>
<dbReference type="GeneID" id="2539826"/>
<dbReference type="KEGG" id="spo:2539826"/>
<dbReference type="PomBase" id="SPBC119.06">
    <property type="gene designation" value="sco1"/>
</dbReference>
<dbReference type="VEuPathDB" id="FungiDB:SPBC119.06"/>
<dbReference type="eggNOG" id="KOG2792">
    <property type="taxonomic scope" value="Eukaryota"/>
</dbReference>
<dbReference type="HOGENOM" id="CLU_050131_0_3_1"/>
<dbReference type="InParanoid" id="O42899"/>
<dbReference type="OMA" id="FFGFTMC"/>
<dbReference type="PhylomeDB" id="O42899"/>
<dbReference type="PRO" id="PR:O42899"/>
<dbReference type="Proteomes" id="UP000002485">
    <property type="component" value="Chromosome II"/>
</dbReference>
<dbReference type="GO" id="GO:0005743">
    <property type="term" value="C:mitochondrial inner membrane"/>
    <property type="evidence" value="ECO:0000250"/>
    <property type="project" value="PomBase"/>
</dbReference>
<dbReference type="GO" id="GO:0016531">
    <property type="term" value="F:copper chaperone activity"/>
    <property type="evidence" value="ECO:0000250"/>
    <property type="project" value="PomBase"/>
</dbReference>
<dbReference type="GO" id="GO:0005507">
    <property type="term" value="F:copper ion binding"/>
    <property type="evidence" value="ECO:0000250"/>
    <property type="project" value="PomBase"/>
</dbReference>
<dbReference type="GO" id="GO:0006878">
    <property type="term" value="P:intracellular copper ion homeostasis"/>
    <property type="evidence" value="ECO:0007669"/>
    <property type="project" value="InterPro"/>
</dbReference>
<dbReference type="GO" id="GO:0033617">
    <property type="term" value="P:mitochondrial cytochrome c oxidase assembly"/>
    <property type="evidence" value="ECO:0000318"/>
    <property type="project" value="GO_Central"/>
</dbReference>
<dbReference type="CDD" id="cd02968">
    <property type="entry name" value="SCO"/>
    <property type="match status" value="1"/>
</dbReference>
<dbReference type="FunFam" id="3.40.30.10:FF:000013">
    <property type="entry name" value="Blast:Protein SCO1 homolog, mitochondrial"/>
    <property type="match status" value="1"/>
</dbReference>
<dbReference type="Gene3D" id="3.40.30.10">
    <property type="entry name" value="Glutaredoxin"/>
    <property type="match status" value="1"/>
</dbReference>
<dbReference type="InterPro" id="IPR003782">
    <property type="entry name" value="SCO1/SenC"/>
</dbReference>
<dbReference type="InterPro" id="IPR017276">
    <property type="entry name" value="Synth_of_cyt-c-oxidase_Sco1/2"/>
</dbReference>
<dbReference type="InterPro" id="IPR036249">
    <property type="entry name" value="Thioredoxin-like_sf"/>
</dbReference>
<dbReference type="PANTHER" id="PTHR12151:SF5">
    <property type="entry name" value="AT19154P"/>
    <property type="match status" value="1"/>
</dbReference>
<dbReference type="PANTHER" id="PTHR12151">
    <property type="entry name" value="ELECTRON TRANSPORT PROTIN SCO1/SENC FAMILY MEMBER"/>
    <property type="match status" value="1"/>
</dbReference>
<dbReference type="Pfam" id="PF02630">
    <property type="entry name" value="SCO1-SenC"/>
    <property type="match status" value="1"/>
</dbReference>
<dbReference type="PIRSF" id="PIRSF037736">
    <property type="entry name" value="SCO1"/>
    <property type="match status" value="1"/>
</dbReference>
<dbReference type="SUPFAM" id="SSF52833">
    <property type="entry name" value="Thioredoxin-like"/>
    <property type="match status" value="1"/>
</dbReference>
<organism>
    <name type="scientific">Schizosaccharomyces pombe (strain 972 / ATCC 24843)</name>
    <name type="common">Fission yeast</name>
    <dbReference type="NCBI Taxonomy" id="284812"/>
    <lineage>
        <taxon>Eukaryota</taxon>
        <taxon>Fungi</taxon>
        <taxon>Dikarya</taxon>
        <taxon>Ascomycota</taxon>
        <taxon>Taphrinomycotina</taxon>
        <taxon>Schizosaccharomycetes</taxon>
        <taxon>Schizosaccharomycetales</taxon>
        <taxon>Schizosaccharomycetaceae</taxon>
        <taxon>Schizosaccharomyces</taxon>
    </lineage>
</organism>